<gene>
    <name evidence="1" type="primary">rpmI</name>
    <name type="ordered locus">BMEI2008</name>
</gene>
<comment type="similarity">
    <text evidence="1">Belongs to the bacterial ribosomal protein bL35 family.</text>
</comment>
<accession>P66265</accession>
<accession>Q8YE70</accession>
<evidence type="ECO:0000255" key="1">
    <source>
        <dbReference type="HAMAP-Rule" id="MF_00514"/>
    </source>
</evidence>
<evidence type="ECO:0000305" key="2"/>
<organism>
    <name type="scientific">Brucella melitensis biotype 1 (strain ATCC 23456 / CCUG 17765 / NCTC 10094 / 16M)</name>
    <dbReference type="NCBI Taxonomy" id="224914"/>
    <lineage>
        <taxon>Bacteria</taxon>
        <taxon>Pseudomonadati</taxon>
        <taxon>Pseudomonadota</taxon>
        <taxon>Alphaproteobacteria</taxon>
        <taxon>Hyphomicrobiales</taxon>
        <taxon>Brucellaceae</taxon>
        <taxon>Brucella/Ochrobactrum group</taxon>
        <taxon>Brucella</taxon>
    </lineage>
</organism>
<name>RL35_BRUME</name>
<reference key="1">
    <citation type="journal article" date="2002" name="Proc. Natl. Acad. Sci. U.S.A.">
        <title>The genome sequence of the facultative intracellular pathogen Brucella melitensis.</title>
        <authorList>
            <person name="DelVecchio V.G."/>
            <person name="Kapatral V."/>
            <person name="Redkar R.J."/>
            <person name="Patra G."/>
            <person name="Mujer C."/>
            <person name="Los T."/>
            <person name="Ivanova N."/>
            <person name="Anderson I."/>
            <person name="Bhattacharyya A."/>
            <person name="Lykidis A."/>
            <person name="Reznik G."/>
            <person name="Jablonski L."/>
            <person name="Larsen N."/>
            <person name="D'Souza M."/>
            <person name="Bernal A."/>
            <person name="Mazur M."/>
            <person name="Goltsman E."/>
            <person name="Selkov E."/>
            <person name="Elzer P.H."/>
            <person name="Hagius S."/>
            <person name="O'Callaghan D."/>
            <person name="Letesson J.-J."/>
            <person name="Haselkorn R."/>
            <person name="Kyrpides N.C."/>
            <person name="Overbeek R."/>
        </authorList>
    </citation>
    <scope>NUCLEOTIDE SEQUENCE [LARGE SCALE GENOMIC DNA]</scope>
    <source>
        <strain>ATCC 23456 / CCUG 17765 / NCTC 10094 / 16M</strain>
    </source>
</reference>
<proteinExistence type="inferred from homology"/>
<feature type="chain" id="PRO_0000177337" description="Large ribosomal subunit protein bL35">
    <location>
        <begin position="1"/>
        <end position="66"/>
    </location>
</feature>
<dbReference type="EMBL" id="AE008917">
    <property type="protein sequence ID" value="AAL53189.1"/>
    <property type="molecule type" value="Genomic_DNA"/>
</dbReference>
<dbReference type="PIR" id="AB3503">
    <property type="entry name" value="AB3503"/>
</dbReference>
<dbReference type="RefSeq" id="WP_002965184.1">
    <property type="nucleotide sequence ID" value="NZ_GG703778.1"/>
</dbReference>
<dbReference type="SMR" id="P66265"/>
<dbReference type="GeneID" id="93017574"/>
<dbReference type="KEGG" id="bme:BMEI2008"/>
<dbReference type="KEGG" id="bmel:DK63_1483"/>
<dbReference type="PATRIC" id="fig|224914.52.peg.1563"/>
<dbReference type="eggNOG" id="COG0291">
    <property type="taxonomic scope" value="Bacteria"/>
</dbReference>
<dbReference type="Proteomes" id="UP000000419">
    <property type="component" value="Chromosome I"/>
</dbReference>
<dbReference type="GO" id="GO:0022625">
    <property type="term" value="C:cytosolic large ribosomal subunit"/>
    <property type="evidence" value="ECO:0007669"/>
    <property type="project" value="TreeGrafter"/>
</dbReference>
<dbReference type="GO" id="GO:0003735">
    <property type="term" value="F:structural constituent of ribosome"/>
    <property type="evidence" value="ECO:0007669"/>
    <property type="project" value="InterPro"/>
</dbReference>
<dbReference type="GO" id="GO:0006412">
    <property type="term" value="P:translation"/>
    <property type="evidence" value="ECO:0007669"/>
    <property type="project" value="UniProtKB-UniRule"/>
</dbReference>
<dbReference type="FunFam" id="4.10.410.60:FF:000001">
    <property type="entry name" value="50S ribosomal protein L35"/>
    <property type="match status" value="1"/>
</dbReference>
<dbReference type="Gene3D" id="4.10.410.60">
    <property type="match status" value="1"/>
</dbReference>
<dbReference type="HAMAP" id="MF_00514">
    <property type="entry name" value="Ribosomal_bL35"/>
    <property type="match status" value="1"/>
</dbReference>
<dbReference type="InterPro" id="IPR001706">
    <property type="entry name" value="Ribosomal_bL35"/>
</dbReference>
<dbReference type="InterPro" id="IPR021137">
    <property type="entry name" value="Ribosomal_bL35-like"/>
</dbReference>
<dbReference type="InterPro" id="IPR018265">
    <property type="entry name" value="Ribosomal_bL35_CS"/>
</dbReference>
<dbReference type="InterPro" id="IPR037229">
    <property type="entry name" value="Ribosomal_bL35_sf"/>
</dbReference>
<dbReference type="NCBIfam" id="TIGR00001">
    <property type="entry name" value="rpmI_bact"/>
    <property type="match status" value="1"/>
</dbReference>
<dbReference type="PANTHER" id="PTHR33343">
    <property type="entry name" value="54S RIBOSOMAL PROTEIN BL35M"/>
    <property type="match status" value="1"/>
</dbReference>
<dbReference type="PANTHER" id="PTHR33343:SF1">
    <property type="entry name" value="LARGE RIBOSOMAL SUBUNIT PROTEIN BL35M"/>
    <property type="match status" value="1"/>
</dbReference>
<dbReference type="Pfam" id="PF01632">
    <property type="entry name" value="Ribosomal_L35p"/>
    <property type="match status" value="1"/>
</dbReference>
<dbReference type="PRINTS" id="PR00064">
    <property type="entry name" value="RIBOSOMALL35"/>
</dbReference>
<dbReference type="SUPFAM" id="SSF143034">
    <property type="entry name" value="L35p-like"/>
    <property type="match status" value="1"/>
</dbReference>
<dbReference type="PROSITE" id="PS00936">
    <property type="entry name" value="RIBOSOMAL_L35"/>
    <property type="match status" value="1"/>
</dbReference>
<protein>
    <recommendedName>
        <fullName evidence="1">Large ribosomal subunit protein bL35</fullName>
    </recommendedName>
    <alternativeName>
        <fullName evidence="2">50S ribosomal protein L35</fullName>
    </alternativeName>
</protein>
<sequence>MPKMKTKSAAKKRFKITGTGKVKAAAAGKRHGMIKRSNKFIRDARGTMVLADADAKIVKQFLPNGL</sequence>
<keyword id="KW-0687">Ribonucleoprotein</keyword>
<keyword id="KW-0689">Ribosomal protein</keyword>